<dbReference type="EMBL" id="CP001144">
    <property type="protein sequence ID" value="ACH75300.1"/>
    <property type="molecule type" value="Genomic_DNA"/>
</dbReference>
<dbReference type="RefSeq" id="WP_000331471.1">
    <property type="nucleotide sequence ID" value="NC_011205.1"/>
</dbReference>
<dbReference type="SMR" id="B5FSB1"/>
<dbReference type="KEGG" id="sed:SeD_A4797"/>
<dbReference type="HOGENOM" id="CLU_076075_2_0_6"/>
<dbReference type="Proteomes" id="UP000008322">
    <property type="component" value="Chromosome"/>
</dbReference>
<dbReference type="GO" id="GO:0005737">
    <property type="term" value="C:cytoplasm"/>
    <property type="evidence" value="ECO:0007669"/>
    <property type="project" value="UniProtKB-SubCell"/>
</dbReference>
<dbReference type="GO" id="GO:0046872">
    <property type="term" value="F:metal ion binding"/>
    <property type="evidence" value="ECO:0007669"/>
    <property type="project" value="UniProtKB-KW"/>
</dbReference>
<dbReference type="GO" id="GO:0030091">
    <property type="term" value="P:protein repair"/>
    <property type="evidence" value="ECO:0007669"/>
    <property type="project" value="UniProtKB-UniRule"/>
</dbReference>
<dbReference type="GO" id="GO:0051409">
    <property type="term" value="P:response to nitrosative stress"/>
    <property type="evidence" value="ECO:0007669"/>
    <property type="project" value="UniProtKB-UniRule"/>
</dbReference>
<dbReference type="GO" id="GO:0006979">
    <property type="term" value="P:response to oxidative stress"/>
    <property type="evidence" value="ECO:0007669"/>
    <property type="project" value="UniProtKB-UniRule"/>
</dbReference>
<dbReference type="FunFam" id="1.20.120.520:FF:000001">
    <property type="entry name" value="Iron-sulfur cluster repair protein YtfE"/>
    <property type="match status" value="1"/>
</dbReference>
<dbReference type="Gene3D" id="1.20.120.520">
    <property type="entry name" value="nmb1532 protein domain like"/>
    <property type="match status" value="1"/>
</dbReference>
<dbReference type="HAMAP" id="MF_01606">
    <property type="entry name" value="RIC_YtfE"/>
    <property type="match status" value="1"/>
</dbReference>
<dbReference type="InterPro" id="IPR023742">
    <property type="entry name" value="FeS-repair_YftE"/>
</dbReference>
<dbReference type="InterPro" id="IPR012312">
    <property type="entry name" value="Hemerythrin-like"/>
</dbReference>
<dbReference type="InterPro" id="IPR019903">
    <property type="entry name" value="RIC_family"/>
</dbReference>
<dbReference type="NCBIfam" id="TIGR03652">
    <property type="entry name" value="FeS_repair_RIC"/>
    <property type="match status" value="1"/>
</dbReference>
<dbReference type="NCBIfam" id="NF008221">
    <property type="entry name" value="PRK10992.1"/>
    <property type="match status" value="1"/>
</dbReference>
<dbReference type="PANTHER" id="PTHR36438">
    <property type="entry name" value="IRON-SULFUR CLUSTER REPAIR PROTEIN YTFE"/>
    <property type="match status" value="1"/>
</dbReference>
<dbReference type="PANTHER" id="PTHR36438:SF1">
    <property type="entry name" value="IRON-SULFUR CLUSTER REPAIR PROTEIN YTFE"/>
    <property type="match status" value="1"/>
</dbReference>
<dbReference type="Pfam" id="PF01814">
    <property type="entry name" value="Hemerythrin"/>
    <property type="match status" value="1"/>
</dbReference>
<dbReference type="Pfam" id="PF04405">
    <property type="entry name" value="ScdA_N"/>
    <property type="match status" value="1"/>
</dbReference>
<name>YTFE_SALDC</name>
<reference key="1">
    <citation type="journal article" date="2011" name="J. Bacteriol.">
        <title>Comparative genomics of 28 Salmonella enterica isolates: evidence for CRISPR-mediated adaptive sublineage evolution.</title>
        <authorList>
            <person name="Fricke W.F."/>
            <person name="Mammel M.K."/>
            <person name="McDermott P.F."/>
            <person name="Tartera C."/>
            <person name="White D.G."/>
            <person name="Leclerc J.E."/>
            <person name="Ravel J."/>
            <person name="Cebula T.A."/>
        </authorList>
    </citation>
    <scope>NUCLEOTIDE SEQUENCE [LARGE SCALE GENOMIC DNA]</scope>
    <source>
        <strain>CT_02021853</strain>
    </source>
</reference>
<accession>B5FSB1</accession>
<evidence type="ECO:0000255" key="1">
    <source>
        <dbReference type="HAMAP-Rule" id="MF_01606"/>
    </source>
</evidence>
<keyword id="KW-0963">Cytoplasm</keyword>
<keyword id="KW-0408">Iron</keyword>
<keyword id="KW-0479">Metal-binding</keyword>
<keyword id="KW-0346">Stress response</keyword>
<gene>
    <name evidence="1" type="primary">ytfE</name>
    <name type="ordered locus">SeD_A4797</name>
</gene>
<feature type="chain" id="PRO_1000148183" description="Iron-sulfur cluster repair protein YtfE">
    <location>
        <begin position="1"/>
        <end position="220"/>
    </location>
</feature>
<protein>
    <recommendedName>
        <fullName evidence="1">Iron-sulfur cluster repair protein YtfE</fullName>
    </recommendedName>
</protein>
<comment type="function">
    <text evidence="1">Di-iron-containing protein involved in the repair of iron-sulfur clusters damaged by oxidative and nitrosative stress conditions.</text>
</comment>
<comment type="subunit">
    <text evidence="1">Homodimer.</text>
</comment>
<comment type="subcellular location">
    <subcellularLocation>
        <location evidence="1">Cytoplasm</location>
    </subcellularLocation>
</comment>
<comment type="similarity">
    <text evidence="1">Belongs to the RIC family. YtfE subfamily.</text>
</comment>
<sequence>MAYRDQPLGELALSIPRASALFRQYDMDYCCGGKQTLARAAARHDVDIDIIEAQLAQLAEQPIEKDWRAVPLADIIDHIVVRYHDRHREQLPELILQATKVERVHADKPNVPRGLTKYLTALHEELSSHMMKEEQILFPMIKQGMGRQATGPISVMESEHDEAGELVDVIKHVTQNVTPPPEACTTWKAMYNGINEMIDDLMEHISLENNVLFPRALAGE</sequence>
<proteinExistence type="inferred from homology"/>
<organism>
    <name type="scientific">Salmonella dublin (strain CT_02021853)</name>
    <dbReference type="NCBI Taxonomy" id="439851"/>
    <lineage>
        <taxon>Bacteria</taxon>
        <taxon>Pseudomonadati</taxon>
        <taxon>Pseudomonadota</taxon>
        <taxon>Gammaproteobacteria</taxon>
        <taxon>Enterobacterales</taxon>
        <taxon>Enterobacteriaceae</taxon>
        <taxon>Salmonella</taxon>
    </lineage>
</organism>